<dbReference type="EC" id="2.4.2.18" evidence="1"/>
<dbReference type="EMBL" id="BA000018">
    <property type="protein sequence ID" value="BAB42461.1"/>
    <property type="molecule type" value="Genomic_DNA"/>
</dbReference>
<dbReference type="PIR" id="A89913">
    <property type="entry name" value="A89913"/>
</dbReference>
<dbReference type="RefSeq" id="WP_000173833.1">
    <property type="nucleotide sequence ID" value="NC_002745.2"/>
</dbReference>
<dbReference type="SMR" id="P66997"/>
<dbReference type="EnsemblBacteria" id="BAB42461">
    <property type="protein sequence ID" value="BAB42461"/>
    <property type="gene ID" value="BAB42461"/>
</dbReference>
<dbReference type="KEGG" id="sau:SA1201"/>
<dbReference type="HOGENOM" id="CLU_034315_3_0_9"/>
<dbReference type="UniPathway" id="UPA00035">
    <property type="reaction ID" value="UER00041"/>
</dbReference>
<dbReference type="GO" id="GO:0005829">
    <property type="term" value="C:cytosol"/>
    <property type="evidence" value="ECO:0007669"/>
    <property type="project" value="TreeGrafter"/>
</dbReference>
<dbReference type="GO" id="GO:0004048">
    <property type="term" value="F:anthranilate phosphoribosyltransferase activity"/>
    <property type="evidence" value="ECO:0007669"/>
    <property type="project" value="UniProtKB-UniRule"/>
</dbReference>
<dbReference type="GO" id="GO:0000287">
    <property type="term" value="F:magnesium ion binding"/>
    <property type="evidence" value="ECO:0007669"/>
    <property type="project" value="UniProtKB-UniRule"/>
</dbReference>
<dbReference type="GO" id="GO:0000162">
    <property type="term" value="P:L-tryptophan biosynthetic process"/>
    <property type="evidence" value="ECO:0007669"/>
    <property type="project" value="UniProtKB-UniRule"/>
</dbReference>
<dbReference type="FunFam" id="3.40.1030.10:FF:000009">
    <property type="entry name" value="Anthranilate phosphoribosyltransferase"/>
    <property type="match status" value="1"/>
</dbReference>
<dbReference type="Gene3D" id="3.40.1030.10">
    <property type="entry name" value="Nucleoside phosphorylase/phosphoribosyltransferase catalytic domain"/>
    <property type="match status" value="1"/>
</dbReference>
<dbReference type="HAMAP" id="MF_00211">
    <property type="entry name" value="TrpD"/>
    <property type="match status" value="1"/>
</dbReference>
<dbReference type="InterPro" id="IPR005940">
    <property type="entry name" value="Anthranilate_Pribosyl_Tfrase"/>
</dbReference>
<dbReference type="InterPro" id="IPR000312">
    <property type="entry name" value="Glycosyl_Trfase_fam3"/>
</dbReference>
<dbReference type="InterPro" id="IPR035902">
    <property type="entry name" value="Nuc_phospho_transferase"/>
</dbReference>
<dbReference type="NCBIfam" id="TIGR01245">
    <property type="entry name" value="trpD"/>
    <property type="match status" value="1"/>
</dbReference>
<dbReference type="PANTHER" id="PTHR43285">
    <property type="entry name" value="ANTHRANILATE PHOSPHORIBOSYLTRANSFERASE"/>
    <property type="match status" value="1"/>
</dbReference>
<dbReference type="PANTHER" id="PTHR43285:SF2">
    <property type="entry name" value="ANTHRANILATE PHOSPHORIBOSYLTRANSFERASE"/>
    <property type="match status" value="1"/>
</dbReference>
<dbReference type="Pfam" id="PF00591">
    <property type="entry name" value="Glycos_transf_3"/>
    <property type="match status" value="1"/>
</dbReference>
<dbReference type="SUPFAM" id="SSF52418">
    <property type="entry name" value="Nucleoside phosphorylase/phosphoribosyltransferase catalytic domain"/>
    <property type="match status" value="1"/>
</dbReference>
<gene>
    <name evidence="1" type="primary">trpD</name>
    <name type="ordered locus">SA1201</name>
</gene>
<name>TRPD_STAAN</name>
<proteinExistence type="inferred from homology"/>
<comment type="function">
    <text evidence="1">Catalyzes the transfer of the phosphoribosyl group of 5-phosphorylribose-1-pyrophosphate (PRPP) to anthranilate to yield N-(5'-phosphoribosyl)-anthranilate (PRA).</text>
</comment>
<comment type="catalytic activity">
    <reaction evidence="1">
        <text>N-(5-phospho-beta-D-ribosyl)anthranilate + diphosphate = 5-phospho-alpha-D-ribose 1-diphosphate + anthranilate</text>
        <dbReference type="Rhea" id="RHEA:11768"/>
        <dbReference type="ChEBI" id="CHEBI:16567"/>
        <dbReference type="ChEBI" id="CHEBI:18277"/>
        <dbReference type="ChEBI" id="CHEBI:33019"/>
        <dbReference type="ChEBI" id="CHEBI:58017"/>
        <dbReference type="EC" id="2.4.2.18"/>
    </reaction>
</comment>
<comment type="cofactor">
    <cofactor evidence="1">
        <name>Mg(2+)</name>
        <dbReference type="ChEBI" id="CHEBI:18420"/>
    </cofactor>
    <text evidence="1">Binds 2 magnesium ions per monomer.</text>
</comment>
<comment type="pathway">
    <text evidence="1">Amino-acid biosynthesis; L-tryptophan biosynthesis; L-tryptophan from chorismate: step 2/5.</text>
</comment>
<comment type="subunit">
    <text evidence="1">Homodimer.</text>
</comment>
<comment type="similarity">
    <text evidence="1">Belongs to the anthranilate phosphoribosyltransferase family.</text>
</comment>
<protein>
    <recommendedName>
        <fullName evidence="1">Anthranilate phosphoribosyltransferase</fullName>
        <ecNumber evidence="1">2.4.2.18</ecNumber>
    </recommendedName>
</protein>
<reference key="1">
    <citation type="journal article" date="2001" name="Lancet">
        <title>Whole genome sequencing of meticillin-resistant Staphylococcus aureus.</title>
        <authorList>
            <person name="Kuroda M."/>
            <person name="Ohta T."/>
            <person name="Uchiyama I."/>
            <person name="Baba T."/>
            <person name="Yuzawa H."/>
            <person name="Kobayashi I."/>
            <person name="Cui L."/>
            <person name="Oguchi A."/>
            <person name="Aoki K."/>
            <person name="Nagai Y."/>
            <person name="Lian J.-Q."/>
            <person name="Ito T."/>
            <person name="Kanamori M."/>
            <person name="Matsumaru H."/>
            <person name="Maruyama A."/>
            <person name="Murakami H."/>
            <person name="Hosoyama A."/>
            <person name="Mizutani-Ui Y."/>
            <person name="Takahashi N.K."/>
            <person name="Sawano T."/>
            <person name="Inoue R."/>
            <person name="Kaito C."/>
            <person name="Sekimizu K."/>
            <person name="Hirakawa H."/>
            <person name="Kuhara S."/>
            <person name="Goto S."/>
            <person name="Yabuzaki J."/>
            <person name="Kanehisa M."/>
            <person name="Yamashita A."/>
            <person name="Oshima K."/>
            <person name="Furuya K."/>
            <person name="Yoshino C."/>
            <person name="Shiba T."/>
            <person name="Hattori M."/>
            <person name="Ogasawara N."/>
            <person name="Hayashi H."/>
            <person name="Hiramatsu K."/>
        </authorList>
    </citation>
    <scope>NUCLEOTIDE SEQUENCE [LARGE SCALE GENOMIC DNA]</scope>
    <source>
        <strain>N315</strain>
    </source>
</reference>
<keyword id="KW-0028">Amino-acid biosynthesis</keyword>
<keyword id="KW-0057">Aromatic amino acid biosynthesis</keyword>
<keyword id="KW-0328">Glycosyltransferase</keyword>
<keyword id="KW-0460">Magnesium</keyword>
<keyword id="KW-0479">Metal-binding</keyword>
<keyword id="KW-0808">Transferase</keyword>
<keyword id="KW-0822">Tryptophan biosynthesis</keyword>
<accession>P66997</accession>
<accession>Q99UB2</accession>
<sequence length="332" mass="36526">MTLLTRIKTETILLESDIKELIDILISPSIGTDIKYELLSSYSEREIQQQELTYIVRSLINTMYPHQPCYEGAMCVCGTGGDKSNSFNISTTVAFVVASAGVKVIKHGNKSITSNSGSTDLLNQMNIQTTTVDDTPNQLNEKDLVFIGATESYPIMKYMQPVRKMIGKPTILNLVGPLINPYHLTYQMVGVFDPTKLKLVAKTIKDLGRKRAIVLHGANGMDEATLSGDNLIYELTEDGEIKNYTLNATDYGLKHAPNSDFKGGSPEENLAISLNILNGKDQSSRRDVVLLNAGLSLYVAEKVDTIAEGIELATTLIDNGEALKKYHQMRGE</sequence>
<feature type="chain" id="PRO_0000154481" description="Anthranilate phosphoribosyltransferase">
    <location>
        <begin position="1"/>
        <end position="332"/>
    </location>
</feature>
<feature type="binding site" evidence="1">
    <location>
        <position position="78"/>
    </location>
    <ligand>
        <name>5-phospho-alpha-D-ribose 1-diphosphate</name>
        <dbReference type="ChEBI" id="CHEBI:58017"/>
    </ligand>
</feature>
<feature type="binding site" evidence="1">
    <location>
        <position position="78"/>
    </location>
    <ligand>
        <name>anthranilate</name>
        <dbReference type="ChEBI" id="CHEBI:16567"/>
        <label>1</label>
    </ligand>
</feature>
<feature type="binding site" evidence="1">
    <location>
        <begin position="81"/>
        <end position="82"/>
    </location>
    <ligand>
        <name>5-phospho-alpha-D-ribose 1-diphosphate</name>
        <dbReference type="ChEBI" id="CHEBI:58017"/>
    </ligand>
</feature>
<feature type="binding site" evidence="1">
    <location>
        <position position="86"/>
    </location>
    <ligand>
        <name>5-phospho-alpha-D-ribose 1-diphosphate</name>
        <dbReference type="ChEBI" id="CHEBI:58017"/>
    </ligand>
</feature>
<feature type="binding site" evidence="1">
    <location>
        <begin position="88"/>
        <end position="91"/>
    </location>
    <ligand>
        <name>5-phospho-alpha-D-ribose 1-diphosphate</name>
        <dbReference type="ChEBI" id="CHEBI:58017"/>
    </ligand>
</feature>
<feature type="binding site" evidence="1">
    <location>
        <position position="90"/>
    </location>
    <ligand>
        <name>Mg(2+)</name>
        <dbReference type="ChEBI" id="CHEBI:18420"/>
        <label>1</label>
    </ligand>
</feature>
<feature type="binding site" evidence="1">
    <location>
        <begin position="106"/>
        <end position="114"/>
    </location>
    <ligand>
        <name>5-phospho-alpha-D-ribose 1-diphosphate</name>
        <dbReference type="ChEBI" id="CHEBI:58017"/>
    </ligand>
</feature>
<feature type="binding site" evidence="1">
    <location>
        <position position="109"/>
    </location>
    <ligand>
        <name>anthranilate</name>
        <dbReference type="ChEBI" id="CHEBI:16567"/>
        <label>1</label>
    </ligand>
</feature>
<feature type="binding site" evidence="1">
    <location>
        <position position="118"/>
    </location>
    <ligand>
        <name>5-phospho-alpha-D-ribose 1-diphosphate</name>
        <dbReference type="ChEBI" id="CHEBI:58017"/>
    </ligand>
</feature>
<feature type="binding site" evidence="1">
    <location>
        <position position="163"/>
    </location>
    <ligand>
        <name>anthranilate</name>
        <dbReference type="ChEBI" id="CHEBI:16567"/>
        <label>2</label>
    </ligand>
</feature>
<feature type="binding site" evidence="1">
    <location>
        <position position="222"/>
    </location>
    <ligand>
        <name>Mg(2+)</name>
        <dbReference type="ChEBI" id="CHEBI:18420"/>
        <label>2</label>
    </ligand>
</feature>
<feature type="binding site" evidence="1">
    <location>
        <position position="223"/>
    </location>
    <ligand>
        <name>Mg(2+)</name>
        <dbReference type="ChEBI" id="CHEBI:18420"/>
        <label>1</label>
    </ligand>
</feature>
<feature type="binding site" evidence="1">
    <location>
        <position position="223"/>
    </location>
    <ligand>
        <name>Mg(2+)</name>
        <dbReference type="ChEBI" id="CHEBI:18420"/>
        <label>2</label>
    </ligand>
</feature>
<organism>
    <name type="scientific">Staphylococcus aureus (strain N315)</name>
    <dbReference type="NCBI Taxonomy" id="158879"/>
    <lineage>
        <taxon>Bacteria</taxon>
        <taxon>Bacillati</taxon>
        <taxon>Bacillota</taxon>
        <taxon>Bacilli</taxon>
        <taxon>Bacillales</taxon>
        <taxon>Staphylococcaceae</taxon>
        <taxon>Staphylococcus</taxon>
    </lineage>
</organism>
<evidence type="ECO:0000255" key="1">
    <source>
        <dbReference type="HAMAP-Rule" id="MF_00211"/>
    </source>
</evidence>